<sequence length="107" mass="12857">MNKKELFDAFDGFSQNLMVTLAEIEAMKKQVQSLVEENTILRLENTKLRERLSHLEHETVAKNPFKQRKDHLEGIYDEGFHICNFFYGQRRENDEECMFCRELLDRK</sequence>
<organism>
    <name type="scientific">Streptococcus pyogenes serotype M18 (strain MGAS8232)</name>
    <dbReference type="NCBI Taxonomy" id="186103"/>
    <lineage>
        <taxon>Bacteria</taxon>
        <taxon>Bacillati</taxon>
        <taxon>Bacillota</taxon>
        <taxon>Bacilli</taxon>
        <taxon>Lactobacillales</taxon>
        <taxon>Streptococcaceae</taxon>
        <taxon>Streptococcus</taxon>
    </lineage>
</organism>
<protein>
    <recommendedName>
        <fullName evidence="1">Replication initiation control protein YabA</fullName>
    </recommendedName>
</protein>
<name>YABA_STRP8</name>
<gene>
    <name evidence="1" type="primary">yabA</name>
    <name type="ordered locus">spyM18_0455</name>
</gene>
<comment type="function">
    <text evidence="1">Involved in control of chromosome replication initiation. Inhibits the cooperative binding of DnaA to the oriC region, thus negatively regulating initiation of chromosome replication. Inhibits the ability of DnaA-ATP to form a helix on DNA; does not disassemble preformed DnaA-DNA helices. Decreases the residence time of DnaA on the chromosome at its binding sites (oriC, replication forks and promoter-binding sites). Tethers DnaA to the replication machinery via the DNA polymerase beta sliding clamp subunit (dnaN). Associates with oriC and other DnaA targets on the chromosome in a DnaA-dependent manner.</text>
</comment>
<comment type="cofactor">
    <cofactor evidence="1">
        <name>Zn(2+)</name>
        <dbReference type="ChEBI" id="CHEBI:29105"/>
    </cofactor>
    <text evidence="1">Binds 1 zinc ion per subunit.</text>
</comment>
<comment type="subunit">
    <text evidence="1">Homotetramer. Interacts with both DnaA and DnaN, acting as a bridge between these two proteins.</text>
</comment>
<comment type="subcellular location">
    <subcellularLocation>
        <location evidence="1">Cytoplasm</location>
        <location evidence="1">Nucleoid</location>
    </subcellularLocation>
    <text evidence="1">Localizes in tight foci, which correspond to the replisome at mid-cell throughout the cell cycle.</text>
</comment>
<comment type="similarity">
    <text evidence="1">Belongs to the YabA family.</text>
</comment>
<evidence type="ECO:0000255" key="1">
    <source>
        <dbReference type="HAMAP-Rule" id="MF_01159"/>
    </source>
</evidence>
<reference key="1">
    <citation type="journal article" date="2002" name="Proc. Natl. Acad. Sci. U.S.A.">
        <title>Genome sequence and comparative microarray analysis of serotype M18 group A Streptococcus strains associated with acute rheumatic fever outbreaks.</title>
        <authorList>
            <person name="Smoot J.C."/>
            <person name="Barbian K.D."/>
            <person name="Van Gompel J.J."/>
            <person name="Smoot L.M."/>
            <person name="Chaussee M.S."/>
            <person name="Sylva G.L."/>
            <person name="Sturdevant D.E."/>
            <person name="Ricklefs S.M."/>
            <person name="Porcella S.F."/>
            <person name="Parkins L.D."/>
            <person name="Beres S.B."/>
            <person name="Campbell D.S."/>
            <person name="Smith T.M."/>
            <person name="Zhang Q."/>
            <person name="Kapur V."/>
            <person name="Daly J.A."/>
            <person name="Veasy L.G."/>
            <person name="Musser J.M."/>
        </authorList>
    </citation>
    <scope>NUCLEOTIDE SEQUENCE [LARGE SCALE GENOMIC DNA]</scope>
    <source>
        <strain>MGAS8232</strain>
    </source>
</reference>
<proteinExistence type="inferred from homology"/>
<dbReference type="EMBL" id="AE009949">
    <property type="protein sequence ID" value="AAL97188.1"/>
    <property type="molecule type" value="Genomic_DNA"/>
</dbReference>
<dbReference type="RefSeq" id="WP_011017424.1">
    <property type="nucleotide sequence ID" value="NC_003485.1"/>
</dbReference>
<dbReference type="SMR" id="Q8P2A7"/>
<dbReference type="KEGG" id="spm:spyM18_0455"/>
<dbReference type="HOGENOM" id="CLU_157169_0_0_9"/>
<dbReference type="GO" id="GO:0009295">
    <property type="term" value="C:nucleoid"/>
    <property type="evidence" value="ECO:0007669"/>
    <property type="project" value="UniProtKB-SubCell"/>
</dbReference>
<dbReference type="GO" id="GO:0006260">
    <property type="term" value="P:DNA replication"/>
    <property type="evidence" value="ECO:0007669"/>
    <property type="project" value="UniProtKB-UniRule"/>
</dbReference>
<dbReference type="HAMAP" id="MF_01159">
    <property type="entry name" value="YabA"/>
    <property type="match status" value="1"/>
</dbReference>
<dbReference type="InterPro" id="IPR010377">
    <property type="entry name" value="YabA"/>
</dbReference>
<dbReference type="NCBIfam" id="NF009640">
    <property type="entry name" value="PRK13169.1-1"/>
    <property type="match status" value="1"/>
</dbReference>
<dbReference type="Pfam" id="PF06156">
    <property type="entry name" value="YabA"/>
    <property type="match status" value="1"/>
</dbReference>
<dbReference type="PIRSF" id="PIRSF021439">
    <property type="entry name" value="DUF972"/>
    <property type="match status" value="1"/>
</dbReference>
<feature type="chain" id="PRO_0000211932" description="Replication initiation control protein YabA">
    <location>
        <begin position="1"/>
        <end position="107"/>
    </location>
</feature>
<feature type="binding site" evidence="1">
    <location>
        <position position="81"/>
    </location>
    <ligand>
        <name>Zn(2+)</name>
        <dbReference type="ChEBI" id="CHEBI:29105"/>
    </ligand>
</feature>
<feature type="binding site" evidence="1">
    <location>
        <position position="83"/>
    </location>
    <ligand>
        <name>Zn(2+)</name>
        <dbReference type="ChEBI" id="CHEBI:29105"/>
    </ligand>
</feature>
<feature type="binding site" evidence="1">
    <location>
        <position position="97"/>
    </location>
    <ligand>
        <name>Zn(2+)</name>
        <dbReference type="ChEBI" id="CHEBI:29105"/>
    </ligand>
</feature>
<feature type="binding site" evidence="1">
    <location>
        <position position="100"/>
    </location>
    <ligand>
        <name>Zn(2+)</name>
        <dbReference type="ChEBI" id="CHEBI:29105"/>
    </ligand>
</feature>
<keyword id="KW-0963">Cytoplasm</keyword>
<keyword id="KW-0235">DNA replication</keyword>
<keyword id="KW-0236">DNA replication inhibitor</keyword>
<keyword id="KW-0479">Metal-binding</keyword>
<keyword id="KW-0862">Zinc</keyword>
<accession>Q8P2A7</accession>